<sequence length="242" mass="26015">MKRSKTLRAADAKVDREKLYAPLEAVRLAKETSTTKFDGTVEVAFRLGVDPRKADQMVRGTVNLPHGTGKTARVLVFATGDRAAAAEAAGADIVGDDELINEIAKGNRLNEFDAVVATPDLMGKVGRLGRVLGPRGLMPNPKTGTVTMDVAKAVTEIKGGKIEFRVDKHSNLHFIIGKVSFTDEQLVENYGAALDEILRLKPSAAKGRYIKKAALSTTMGPGIHLDSNRTRNLLVEEDPAAV</sequence>
<proteinExistence type="inferred from homology"/>
<comment type="function">
    <text evidence="1">Binds directly to 23S rRNA. The L1 stalk is quite mobile in the ribosome, and is involved in E site tRNA release.</text>
</comment>
<comment type="function">
    <text evidence="1">Protein L1 is also a translational repressor protein, it controls the translation of the L11 operon by binding to its mRNA.</text>
</comment>
<comment type="subunit">
    <text evidence="1">Part of the 50S ribosomal subunit.</text>
</comment>
<comment type="similarity">
    <text evidence="1">Belongs to the universal ribosomal protein uL1 family.</text>
</comment>
<gene>
    <name evidence="1" type="primary">rplA</name>
</gene>
<organism>
    <name type="scientific">Streptomyces virginiae</name>
    <name type="common">Streptomyces cinnamonensis</name>
    <dbReference type="NCBI Taxonomy" id="1961"/>
    <lineage>
        <taxon>Bacteria</taxon>
        <taxon>Bacillati</taxon>
        <taxon>Actinomycetota</taxon>
        <taxon>Actinomycetes</taxon>
        <taxon>Kitasatosporales</taxon>
        <taxon>Streptomycetaceae</taxon>
        <taxon>Streptomyces</taxon>
    </lineage>
</organism>
<accession>P48951</accession>
<evidence type="ECO:0000255" key="1">
    <source>
        <dbReference type="HAMAP-Rule" id="MF_01318"/>
    </source>
</evidence>
<evidence type="ECO:0000305" key="2"/>
<name>RL1_STRVG</name>
<keyword id="KW-0678">Repressor</keyword>
<keyword id="KW-0687">Ribonucleoprotein</keyword>
<keyword id="KW-0689">Ribosomal protein</keyword>
<keyword id="KW-0694">RNA-binding</keyword>
<keyword id="KW-0699">rRNA-binding</keyword>
<keyword id="KW-0810">Translation regulation</keyword>
<keyword id="KW-0820">tRNA-binding</keyword>
<dbReference type="EMBL" id="D50624">
    <property type="protein sequence ID" value="BAA09303.1"/>
    <property type="molecule type" value="Genomic_DNA"/>
</dbReference>
<dbReference type="PIR" id="T11790">
    <property type="entry name" value="T11790"/>
</dbReference>
<dbReference type="RefSeq" id="WP_033225044.1">
    <property type="nucleotide sequence ID" value="NZ_CP107871.1"/>
</dbReference>
<dbReference type="SMR" id="P48951"/>
<dbReference type="eggNOG" id="COG0081">
    <property type="taxonomic scope" value="Bacteria"/>
</dbReference>
<dbReference type="GO" id="GO:0015934">
    <property type="term" value="C:large ribosomal subunit"/>
    <property type="evidence" value="ECO:0007669"/>
    <property type="project" value="InterPro"/>
</dbReference>
<dbReference type="GO" id="GO:0019843">
    <property type="term" value="F:rRNA binding"/>
    <property type="evidence" value="ECO:0007669"/>
    <property type="project" value="UniProtKB-UniRule"/>
</dbReference>
<dbReference type="GO" id="GO:0003735">
    <property type="term" value="F:structural constituent of ribosome"/>
    <property type="evidence" value="ECO:0007669"/>
    <property type="project" value="InterPro"/>
</dbReference>
<dbReference type="GO" id="GO:0000049">
    <property type="term" value="F:tRNA binding"/>
    <property type="evidence" value="ECO:0007669"/>
    <property type="project" value="UniProtKB-KW"/>
</dbReference>
<dbReference type="GO" id="GO:0006417">
    <property type="term" value="P:regulation of translation"/>
    <property type="evidence" value="ECO:0007669"/>
    <property type="project" value="UniProtKB-KW"/>
</dbReference>
<dbReference type="GO" id="GO:0006412">
    <property type="term" value="P:translation"/>
    <property type="evidence" value="ECO:0007669"/>
    <property type="project" value="UniProtKB-UniRule"/>
</dbReference>
<dbReference type="CDD" id="cd00403">
    <property type="entry name" value="Ribosomal_L1"/>
    <property type="match status" value="1"/>
</dbReference>
<dbReference type="FunFam" id="3.40.50.790:FF:000001">
    <property type="entry name" value="50S ribosomal protein L1"/>
    <property type="match status" value="1"/>
</dbReference>
<dbReference type="Gene3D" id="3.30.190.20">
    <property type="match status" value="1"/>
</dbReference>
<dbReference type="Gene3D" id="3.40.50.790">
    <property type="match status" value="1"/>
</dbReference>
<dbReference type="HAMAP" id="MF_01318_B">
    <property type="entry name" value="Ribosomal_uL1_B"/>
    <property type="match status" value="1"/>
</dbReference>
<dbReference type="InterPro" id="IPR005878">
    <property type="entry name" value="Ribosom_uL1_bac-type"/>
</dbReference>
<dbReference type="InterPro" id="IPR002143">
    <property type="entry name" value="Ribosomal_uL1"/>
</dbReference>
<dbReference type="InterPro" id="IPR023674">
    <property type="entry name" value="Ribosomal_uL1-like"/>
</dbReference>
<dbReference type="InterPro" id="IPR028364">
    <property type="entry name" value="Ribosomal_uL1/biogenesis"/>
</dbReference>
<dbReference type="InterPro" id="IPR016095">
    <property type="entry name" value="Ribosomal_uL1_3-a/b-sand"/>
</dbReference>
<dbReference type="InterPro" id="IPR023673">
    <property type="entry name" value="Ribosomal_uL1_CS"/>
</dbReference>
<dbReference type="NCBIfam" id="TIGR01169">
    <property type="entry name" value="rplA_bact"/>
    <property type="match status" value="1"/>
</dbReference>
<dbReference type="PANTHER" id="PTHR36427">
    <property type="entry name" value="54S RIBOSOMAL PROTEIN L1, MITOCHONDRIAL"/>
    <property type="match status" value="1"/>
</dbReference>
<dbReference type="PANTHER" id="PTHR36427:SF3">
    <property type="entry name" value="LARGE RIBOSOMAL SUBUNIT PROTEIN UL1M"/>
    <property type="match status" value="1"/>
</dbReference>
<dbReference type="Pfam" id="PF00687">
    <property type="entry name" value="Ribosomal_L1"/>
    <property type="match status" value="1"/>
</dbReference>
<dbReference type="PIRSF" id="PIRSF002155">
    <property type="entry name" value="Ribosomal_L1"/>
    <property type="match status" value="1"/>
</dbReference>
<dbReference type="SUPFAM" id="SSF56808">
    <property type="entry name" value="Ribosomal protein L1"/>
    <property type="match status" value="1"/>
</dbReference>
<dbReference type="PROSITE" id="PS01199">
    <property type="entry name" value="RIBOSOMAL_L1"/>
    <property type="match status" value="1"/>
</dbReference>
<reference key="1">
    <citation type="journal article" date="1996" name="Gene">
        <title>Gene organization in the ada-rplL region of Streptomyces virginiae.</title>
        <authorList>
            <person name="Katayama M."/>
            <person name="Sakai Y."/>
            <person name="Okamoto S."/>
            <person name="Ihara F."/>
            <person name="Nihira T."/>
            <person name="Yamada Y."/>
        </authorList>
    </citation>
    <scope>NUCLEOTIDE SEQUENCE [GENOMIC DNA]</scope>
</reference>
<feature type="chain" id="PRO_0000125756" description="Large ribosomal subunit protein uL1">
    <location>
        <begin position="1"/>
        <end position="242"/>
    </location>
</feature>
<protein>
    <recommendedName>
        <fullName evidence="1">Large ribosomal subunit protein uL1</fullName>
    </recommendedName>
    <alternativeName>
        <fullName evidence="2">50S ribosomal protein L1</fullName>
    </alternativeName>
</protein>